<proteinExistence type="inferred from homology"/>
<protein>
    <recommendedName>
        <fullName evidence="1">Indole-3-glycerol phosphate synthase</fullName>
        <shortName evidence="1">IGPS</shortName>
        <ecNumber evidence="1">4.1.1.48</ecNumber>
    </recommendedName>
</protein>
<comment type="catalytic activity">
    <reaction evidence="1">
        <text>1-(2-carboxyphenylamino)-1-deoxy-D-ribulose 5-phosphate + H(+) = (1S,2R)-1-C-(indol-3-yl)glycerol 3-phosphate + CO2 + H2O</text>
        <dbReference type="Rhea" id="RHEA:23476"/>
        <dbReference type="ChEBI" id="CHEBI:15377"/>
        <dbReference type="ChEBI" id="CHEBI:15378"/>
        <dbReference type="ChEBI" id="CHEBI:16526"/>
        <dbReference type="ChEBI" id="CHEBI:58613"/>
        <dbReference type="ChEBI" id="CHEBI:58866"/>
        <dbReference type="EC" id="4.1.1.48"/>
    </reaction>
</comment>
<comment type="pathway">
    <text evidence="1">Amino-acid biosynthesis; L-tryptophan biosynthesis; L-tryptophan from chorismate: step 4/5.</text>
</comment>
<comment type="similarity">
    <text evidence="1">Belongs to the TrpC family.</text>
</comment>
<dbReference type="EC" id="4.1.1.48" evidence="1"/>
<dbReference type="EMBL" id="BA000033">
    <property type="protein sequence ID" value="BAB95122.1"/>
    <property type="molecule type" value="Genomic_DNA"/>
</dbReference>
<dbReference type="RefSeq" id="WP_000154116.1">
    <property type="nucleotide sequence ID" value="NC_003923.1"/>
</dbReference>
<dbReference type="SMR" id="Q8NWU3"/>
<dbReference type="KEGG" id="sam:MW1257"/>
<dbReference type="HOGENOM" id="CLU_034247_2_1_9"/>
<dbReference type="UniPathway" id="UPA00035">
    <property type="reaction ID" value="UER00043"/>
</dbReference>
<dbReference type="GO" id="GO:0004425">
    <property type="term" value="F:indole-3-glycerol-phosphate synthase activity"/>
    <property type="evidence" value="ECO:0007669"/>
    <property type="project" value="UniProtKB-UniRule"/>
</dbReference>
<dbReference type="GO" id="GO:0004640">
    <property type="term" value="F:phosphoribosylanthranilate isomerase activity"/>
    <property type="evidence" value="ECO:0007669"/>
    <property type="project" value="TreeGrafter"/>
</dbReference>
<dbReference type="GO" id="GO:0000162">
    <property type="term" value="P:L-tryptophan biosynthetic process"/>
    <property type="evidence" value="ECO:0007669"/>
    <property type="project" value="UniProtKB-UniRule"/>
</dbReference>
<dbReference type="CDD" id="cd00331">
    <property type="entry name" value="IGPS"/>
    <property type="match status" value="1"/>
</dbReference>
<dbReference type="FunFam" id="3.20.20.70:FF:000212">
    <property type="entry name" value="Indole-3-glycerol phosphate synthase"/>
    <property type="match status" value="1"/>
</dbReference>
<dbReference type="Gene3D" id="3.20.20.70">
    <property type="entry name" value="Aldolase class I"/>
    <property type="match status" value="1"/>
</dbReference>
<dbReference type="HAMAP" id="MF_00134_B">
    <property type="entry name" value="IGPS_B"/>
    <property type="match status" value="1"/>
</dbReference>
<dbReference type="InterPro" id="IPR013785">
    <property type="entry name" value="Aldolase_TIM"/>
</dbReference>
<dbReference type="InterPro" id="IPR045186">
    <property type="entry name" value="Indole-3-glycerol_P_synth"/>
</dbReference>
<dbReference type="InterPro" id="IPR013798">
    <property type="entry name" value="Indole-3-glycerol_P_synth_dom"/>
</dbReference>
<dbReference type="InterPro" id="IPR001468">
    <property type="entry name" value="Indole-3-GlycerolPSynthase_CS"/>
</dbReference>
<dbReference type="InterPro" id="IPR011060">
    <property type="entry name" value="RibuloseP-bd_barrel"/>
</dbReference>
<dbReference type="NCBIfam" id="NF001371">
    <property type="entry name" value="PRK00278.1-3"/>
    <property type="match status" value="1"/>
</dbReference>
<dbReference type="PANTHER" id="PTHR22854:SF2">
    <property type="entry name" value="INDOLE-3-GLYCEROL-PHOSPHATE SYNTHASE"/>
    <property type="match status" value="1"/>
</dbReference>
<dbReference type="PANTHER" id="PTHR22854">
    <property type="entry name" value="TRYPTOPHAN BIOSYNTHESIS PROTEIN"/>
    <property type="match status" value="1"/>
</dbReference>
<dbReference type="Pfam" id="PF00218">
    <property type="entry name" value="IGPS"/>
    <property type="match status" value="1"/>
</dbReference>
<dbReference type="SUPFAM" id="SSF51366">
    <property type="entry name" value="Ribulose-phoshate binding barrel"/>
    <property type="match status" value="1"/>
</dbReference>
<dbReference type="PROSITE" id="PS00614">
    <property type="entry name" value="IGPS"/>
    <property type="match status" value="1"/>
</dbReference>
<name>TRPC_STAAW</name>
<keyword id="KW-0028">Amino-acid biosynthesis</keyword>
<keyword id="KW-0057">Aromatic amino acid biosynthesis</keyword>
<keyword id="KW-0210">Decarboxylase</keyword>
<keyword id="KW-0456">Lyase</keyword>
<keyword id="KW-0822">Tryptophan biosynthesis</keyword>
<gene>
    <name evidence="1" type="primary">trpC</name>
    <name type="ordered locus">MW1257</name>
</gene>
<organism>
    <name type="scientific">Staphylococcus aureus (strain MW2)</name>
    <dbReference type="NCBI Taxonomy" id="196620"/>
    <lineage>
        <taxon>Bacteria</taxon>
        <taxon>Bacillati</taxon>
        <taxon>Bacillota</taxon>
        <taxon>Bacilli</taxon>
        <taxon>Bacillales</taxon>
        <taxon>Staphylococcaceae</taxon>
        <taxon>Staphylococcus</taxon>
    </lineage>
</organism>
<reference key="1">
    <citation type="journal article" date="2002" name="Lancet">
        <title>Genome and virulence determinants of high virulence community-acquired MRSA.</title>
        <authorList>
            <person name="Baba T."/>
            <person name="Takeuchi F."/>
            <person name="Kuroda M."/>
            <person name="Yuzawa H."/>
            <person name="Aoki K."/>
            <person name="Oguchi A."/>
            <person name="Nagai Y."/>
            <person name="Iwama N."/>
            <person name="Asano K."/>
            <person name="Naimi T."/>
            <person name="Kuroda H."/>
            <person name="Cui L."/>
            <person name="Yamamoto K."/>
            <person name="Hiramatsu K."/>
        </authorList>
    </citation>
    <scope>NUCLEOTIDE SEQUENCE [LARGE SCALE GENOMIC DNA]</scope>
    <source>
        <strain>MW2</strain>
    </source>
</reference>
<sequence>MTILSEIVKYKQSLLQNGYYQDKLNTLKSVKIQNKKSFINAIEKEPKLAIIAEIKSKSPTVNDLPERDLSQQISDYDQYGANAVSILTDEKYFGGSFERLQALTTKTTLPVLCKDFIIDPLQIDVAKQAGASMILLIVNILSDKQLKDLYNYAISQNLEVLVEVHDRHELERAYKVNAKLIGVNNRDLKRFVTNVEHTNTILENKKTNHYYISESGIHDASDVRKILHSGIDGLLIGEALMRCDNLSEFLPQLKMQKVKS</sequence>
<feature type="chain" id="PRO_0000154254" description="Indole-3-glycerol phosphate synthase">
    <location>
        <begin position="1"/>
        <end position="260"/>
    </location>
</feature>
<evidence type="ECO:0000255" key="1">
    <source>
        <dbReference type="HAMAP-Rule" id="MF_00134"/>
    </source>
</evidence>
<accession>Q8NWU3</accession>